<feature type="signal peptide" evidence="2">
    <location>
        <begin position="1"/>
        <end position="18"/>
    </location>
</feature>
<feature type="chain" id="PRO_0000326174" description="von Willebrand factor A domain-containing protein 5B1">
    <location>
        <begin position="19"/>
        <end position="1215"/>
    </location>
</feature>
<feature type="domain" description="VIT" evidence="4">
    <location>
        <begin position="19"/>
        <end position="141"/>
    </location>
</feature>
<feature type="domain" description="VWFA" evidence="3">
    <location>
        <begin position="353"/>
        <end position="532"/>
    </location>
</feature>
<feature type="region of interest" description="Disordered" evidence="5">
    <location>
        <begin position="595"/>
        <end position="674"/>
    </location>
</feature>
<feature type="region of interest" description="Disordered" evidence="5">
    <location>
        <begin position="934"/>
        <end position="953"/>
    </location>
</feature>
<feature type="region of interest" description="Disordered" evidence="5">
    <location>
        <begin position="964"/>
        <end position="999"/>
    </location>
</feature>
<feature type="region of interest" description="Disordered" evidence="5">
    <location>
        <begin position="1100"/>
        <end position="1121"/>
    </location>
</feature>
<feature type="compositionally biased region" description="Polar residues" evidence="5">
    <location>
        <begin position="608"/>
        <end position="621"/>
    </location>
</feature>
<feature type="compositionally biased region" description="Polar residues" evidence="5">
    <location>
        <begin position="646"/>
        <end position="667"/>
    </location>
</feature>
<feature type="compositionally biased region" description="Polar residues" evidence="5">
    <location>
        <begin position="964"/>
        <end position="975"/>
    </location>
</feature>
<feature type="compositionally biased region" description="Polar residues" evidence="5">
    <location>
        <begin position="990"/>
        <end position="999"/>
    </location>
</feature>
<feature type="compositionally biased region" description="Polar residues" evidence="5">
    <location>
        <begin position="1100"/>
        <end position="1112"/>
    </location>
</feature>
<feature type="modified residue" description="Phosphotyrosine" evidence="1">
    <location>
        <position position="879"/>
    </location>
</feature>
<feature type="glycosylation site" description="N-linked (GlcNAc...) asparagine" evidence="2">
    <location>
        <position position="132"/>
    </location>
</feature>
<feature type="sequence conflict" description="In Ref. 2; BAB30227." evidence="6" ref="2">
    <original>F</original>
    <variation>L</variation>
    <location>
        <position position="538"/>
    </location>
</feature>
<comment type="subcellular location">
    <subcellularLocation>
        <location evidence="6">Secreted</location>
    </subcellularLocation>
</comment>
<dbReference type="EMBL" id="BC057376">
    <property type="protein sequence ID" value="AAH57376.1"/>
    <property type="molecule type" value="mRNA"/>
</dbReference>
<dbReference type="EMBL" id="BC132477">
    <property type="protein sequence ID" value="AAI32478.2"/>
    <property type="molecule type" value="mRNA"/>
</dbReference>
<dbReference type="EMBL" id="AK016425">
    <property type="protein sequence ID" value="BAB30227.1"/>
    <property type="molecule type" value="mRNA"/>
</dbReference>
<dbReference type="CCDS" id="CCDS51336.1"/>
<dbReference type="RefSeq" id="NP_083677.1">
    <property type="nucleotide sequence ID" value="NM_029401.1"/>
</dbReference>
<dbReference type="RefSeq" id="XP_006539306.1">
    <property type="nucleotide sequence ID" value="XM_006539243.4"/>
</dbReference>
<dbReference type="RefSeq" id="XP_006539307.1">
    <property type="nucleotide sequence ID" value="XM_006539244.2"/>
</dbReference>
<dbReference type="RefSeq" id="XP_011248651.1">
    <property type="nucleotide sequence ID" value="XM_011250349.1"/>
</dbReference>
<dbReference type="RefSeq" id="XP_017175922.1">
    <property type="nucleotide sequence ID" value="XM_017320433.2"/>
</dbReference>
<dbReference type="BioGRID" id="217690">
    <property type="interactions" value="1"/>
</dbReference>
<dbReference type="FunCoup" id="A9Z1V5">
    <property type="interactions" value="2"/>
</dbReference>
<dbReference type="STRING" id="10090.ENSMUSP00000030533"/>
<dbReference type="GlyCosmos" id="A9Z1V5">
    <property type="glycosylation" value="1 site, No reported glycans"/>
</dbReference>
<dbReference type="GlyGen" id="A9Z1V5">
    <property type="glycosylation" value="4 sites, 1 N-linked glycan (1 site)"/>
</dbReference>
<dbReference type="iPTMnet" id="A9Z1V5"/>
<dbReference type="PhosphoSitePlus" id="A9Z1V5"/>
<dbReference type="PaxDb" id="10090-ENSMUSP00000030533"/>
<dbReference type="ProteomicsDB" id="299958"/>
<dbReference type="Antibodypedia" id="29787">
    <property type="antibodies" value="9 antibodies from 7 providers"/>
</dbReference>
<dbReference type="DNASU" id="75718"/>
<dbReference type="Ensembl" id="ENSMUST00000030533.12">
    <property type="protein sequence ID" value="ENSMUSP00000030533.6"/>
    <property type="gene ID" value="ENSMUSG00000028753.13"/>
</dbReference>
<dbReference type="GeneID" id="75718"/>
<dbReference type="KEGG" id="mmu:75718"/>
<dbReference type="UCSC" id="uc008vla.2">
    <property type="organism name" value="mouse"/>
</dbReference>
<dbReference type="AGR" id="MGI:1922968"/>
<dbReference type="CTD" id="127731"/>
<dbReference type="MGI" id="MGI:1922968">
    <property type="gene designation" value="Vwa5b1"/>
</dbReference>
<dbReference type="VEuPathDB" id="HostDB:ENSMUSG00000028753"/>
<dbReference type="eggNOG" id="ENOG502QVJP">
    <property type="taxonomic scope" value="Eukaryota"/>
</dbReference>
<dbReference type="GeneTree" id="ENSGT00940000158938"/>
<dbReference type="HOGENOM" id="CLU_005270_0_0_1"/>
<dbReference type="InParanoid" id="A9Z1V5"/>
<dbReference type="OMA" id="PMKWEVV"/>
<dbReference type="OrthoDB" id="1729737at2759"/>
<dbReference type="PhylomeDB" id="A9Z1V5"/>
<dbReference type="TreeFam" id="TF329720"/>
<dbReference type="BioGRID-ORCS" id="75718">
    <property type="hits" value="2 hits in 76 CRISPR screens"/>
</dbReference>
<dbReference type="PRO" id="PR:A9Z1V5"/>
<dbReference type="Proteomes" id="UP000000589">
    <property type="component" value="Chromosome 4"/>
</dbReference>
<dbReference type="RNAct" id="A9Z1V5">
    <property type="molecule type" value="protein"/>
</dbReference>
<dbReference type="Bgee" id="ENSMUSG00000028753">
    <property type="expression patterns" value="Expressed in hypothalamus and 29 other cell types or tissues"/>
</dbReference>
<dbReference type="ExpressionAtlas" id="A9Z1V5">
    <property type="expression patterns" value="baseline and differential"/>
</dbReference>
<dbReference type="GO" id="GO:0005576">
    <property type="term" value="C:extracellular region"/>
    <property type="evidence" value="ECO:0007669"/>
    <property type="project" value="UniProtKB-SubCell"/>
</dbReference>
<dbReference type="CDD" id="cd01461">
    <property type="entry name" value="vWA_interalpha_trypsin_inhibitor"/>
    <property type="match status" value="1"/>
</dbReference>
<dbReference type="Gene3D" id="3.40.50.410">
    <property type="entry name" value="von Willebrand factor, type A domain"/>
    <property type="match status" value="1"/>
</dbReference>
<dbReference type="InterPro" id="IPR013694">
    <property type="entry name" value="VIT"/>
</dbReference>
<dbReference type="InterPro" id="IPR052627">
    <property type="entry name" value="VWA_domain-containing"/>
</dbReference>
<dbReference type="InterPro" id="IPR002035">
    <property type="entry name" value="VWF_A"/>
</dbReference>
<dbReference type="InterPro" id="IPR036465">
    <property type="entry name" value="vWFA_dom_sf"/>
</dbReference>
<dbReference type="PANTHER" id="PTHR46299:SF1">
    <property type="entry name" value="VON WILLEBRAND FACTOR A DOMAIN-CONTAINING PROTEIN 5B1"/>
    <property type="match status" value="1"/>
</dbReference>
<dbReference type="PANTHER" id="PTHR46299">
    <property type="entry name" value="VON WILLEBRAND FACTOR A DOMAIN-CONTAINING PROTEIN 5B2-RELATED"/>
    <property type="match status" value="1"/>
</dbReference>
<dbReference type="Pfam" id="PF13757">
    <property type="entry name" value="VIT_2"/>
    <property type="match status" value="1"/>
</dbReference>
<dbReference type="Pfam" id="PF13768">
    <property type="entry name" value="VWA_3"/>
    <property type="match status" value="1"/>
</dbReference>
<dbReference type="SMART" id="SM00327">
    <property type="entry name" value="VWA"/>
    <property type="match status" value="1"/>
</dbReference>
<dbReference type="SUPFAM" id="SSF53300">
    <property type="entry name" value="vWA-like"/>
    <property type="match status" value="1"/>
</dbReference>
<dbReference type="PROSITE" id="PS51468">
    <property type="entry name" value="VIT"/>
    <property type="match status" value="1"/>
</dbReference>
<dbReference type="PROSITE" id="PS50234">
    <property type="entry name" value="VWFA"/>
    <property type="match status" value="1"/>
</dbReference>
<protein>
    <recommendedName>
        <fullName>von Willebrand factor A domain-containing protein 5B1</fullName>
    </recommendedName>
</protein>
<reference key="1">
    <citation type="journal article" date="2004" name="Genome Res.">
        <title>The status, quality, and expansion of the NIH full-length cDNA project: the Mammalian Gene Collection (MGC).</title>
        <authorList>
            <consortium name="The MGC Project Team"/>
        </authorList>
    </citation>
    <scope>NUCLEOTIDE SEQUENCE [LARGE SCALE MRNA]</scope>
    <source>
        <strain>C57BL/6J</strain>
        <tissue>Brain</tissue>
    </source>
</reference>
<reference key="2">
    <citation type="journal article" date="2005" name="Science">
        <title>The transcriptional landscape of the mammalian genome.</title>
        <authorList>
            <person name="Carninci P."/>
            <person name="Kasukawa T."/>
            <person name="Katayama S."/>
            <person name="Gough J."/>
            <person name="Frith M.C."/>
            <person name="Maeda N."/>
            <person name="Oyama R."/>
            <person name="Ravasi T."/>
            <person name="Lenhard B."/>
            <person name="Wells C."/>
            <person name="Kodzius R."/>
            <person name="Shimokawa K."/>
            <person name="Bajic V.B."/>
            <person name="Brenner S.E."/>
            <person name="Batalov S."/>
            <person name="Forrest A.R."/>
            <person name="Zavolan M."/>
            <person name="Davis M.J."/>
            <person name="Wilming L.G."/>
            <person name="Aidinis V."/>
            <person name="Allen J.E."/>
            <person name="Ambesi-Impiombato A."/>
            <person name="Apweiler R."/>
            <person name="Aturaliya R.N."/>
            <person name="Bailey T.L."/>
            <person name="Bansal M."/>
            <person name="Baxter L."/>
            <person name="Beisel K.W."/>
            <person name="Bersano T."/>
            <person name="Bono H."/>
            <person name="Chalk A.M."/>
            <person name="Chiu K.P."/>
            <person name="Choudhary V."/>
            <person name="Christoffels A."/>
            <person name="Clutterbuck D.R."/>
            <person name="Crowe M.L."/>
            <person name="Dalla E."/>
            <person name="Dalrymple B.P."/>
            <person name="de Bono B."/>
            <person name="Della Gatta G."/>
            <person name="di Bernardo D."/>
            <person name="Down T."/>
            <person name="Engstrom P."/>
            <person name="Fagiolini M."/>
            <person name="Faulkner G."/>
            <person name="Fletcher C.F."/>
            <person name="Fukushima T."/>
            <person name="Furuno M."/>
            <person name="Futaki S."/>
            <person name="Gariboldi M."/>
            <person name="Georgii-Hemming P."/>
            <person name="Gingeras T.R."/>
            <person name="Gojobori T."/>
            <person name="Green R.E."/>
            <person name="Gustincich S."/>
            <person name="Harbers M."/>
            <person name="Hayashi Y."/>
            <person name="Hensch T.K."/>
            <person name="Hirokawa N."/>
            <person name="Hill D."/>
            <person name="Huminiecki L."/>
            <person name="Iacono M."/>
            <person name="Ikeo K."/>
            <person name="Iwama A."/>
            <person name="Ishikawa T."/>
            <person name="Jakt M."/>
            <person name="Kanapin A."/>
            <person name="Katoh M."/>
            <person name="Kawasawa Y."/>
            <person name="Kelso J."/>
            <person name="Kitamura H."/>
            <person name="Kitano H."/>
            <person name="Kollias G."/>
            <person name="Krishnan S.P."/>
            <person name="Kruger A."/>
            <person name="Kummerfeld S.K."/>
            <person name="Kurochkin I.V."/>
            <person name="Lareau L.F."/>
            <person name="Lazarevic D."/>
            <person name="Lipovich L."/>
            <person name="Liu J."/>
            <person name="Liuni S."/>
            <person name="McWilliam S."/>
            <person name="Madan Babu M."/>
            <person name="Madera M."/>
            <person name="Marchionni L."/>
            <person name="Matsuda H."/>
            <person name="Matsuzawa S."/>
            <person name="Miki H."/>
            <person name="Mignone F."/>
            <person name="Miyake S."/>
            <person name="Morris K."/>
            <person name="Mottagui-Tabar S."/>
            <person name="Mulder N."/>
            <person name="Nakano N."/>
            <person name="Nakauchi H."/>
            <person name="Ng P."/>
            <person name="Nilsson R."/>
            <person name="Nishiguchi S."/>
            <person name="Nishikawa S."/>
            <person name="Nori F."/>
            <person name="Ohara O."/>
            <person name="Okazaki Y."/>
            <person name="Orlando V."/>
            <person name="Pang K.C."/>
            <person name="Pavan W.J."/>
            <person name="Pavesi G."/>
            <person name="Pesole G."/>
            <person name="Petrovsky N."/>
            <person name="Piazza S."/>
            <person name="Reed J."/>
            <person name="Reid J.F."/>
            <person name="Ring B.Z."/>
            <person name="Ringwald M."/>
            <person name="Rost B."/>
            <person name="Ruan Y."/>
            <person name="Salzberg S.L."/>
            <person name="Sandelin A."/>
            <person name="Schneider C."/>
            <person name="Schoenbach C."/>
            <person name="Sekiguchi K."/>
            <person name="Semple C.A."/>
            <person name="Seno S."/>
            <person name="Sessa L."/>
            <person name="Sheng Y."/>
            <person name="Shibata Y."/>
            <person name="Shimada H."/>
            <person name="Shimada K."/>
            <person name="Silva D."/>
            <person name="Sinclair B."/>
            <person name="Sperling S."/>
            <person name="Stupka E."/>
            <person name="Sugiura K."/>
            <person name="Sultana R."/>
            <person name="Takenaka Y."/>
            <person name="Taki K."/>
            <person name="Tammoja K."/>
            <person name="Tan S.L."/>
            <person name="Tang S."/>
            <person name="Taylor M.S."/>
            <person name="Tegner J."/>
            <person name="Teichmann S.A."/>
            <person name="Ueda H.R."/>
            <person name="van Nimwegen E."/>
            <person name="Verardo R."/>
            <person name="Wei C.L."/>
            <person name="Yagi K."/>
            <person name="Yamanishi H."/>
            <person name="Zabarovsky E."/>
            <person name="Zhu S."/>
            <person name="Zimmer A."/>
            <person name="Hide W."/>
            <person name="Bult C."/>
            <person name="Grimmond S.M."/>
            <person name="Teasdale R.D."/>
            <person name="Liu E.T."/>
            <person name="Brusic V."/>
            <person name="Quackenbush J."/>
            <person name="Wahlestedt C."/>
            <person name="Mattick J.S."/>
            <person name="Hume D.A."/>
            <person name="Kai C."/>
            <person name="Sasaki D."/>
            <person name="Tomaru Y."/>
            <person name="Fukuda S."/>
            <person name="Kanamori-Katayama M."/>
            <person name="Suzuki M."/>
            <person name="Aoki J."/>
            <person name="Arakawa T."/>
            <person name="Iida J."/>
            <person name="Imamura K."/>
            <person name="Itoh M."/>
            <person name="Kato T."/>
            <person name="Kawaji H."/>
            <person name="Kawagashira N."/>
            <person name="Kawashima T."/>
            <person name="Kojima M."/>
            <person name="Kondo S."/>
            <person name="Konno H."/>
            <person name="Nakano K."/>
            <person name="Ninomiya N."/>
            <person name="Nishio T."/>
            <person name="Okada M."/>
            <person name="Plessy C."/>
            <person name="Shibata K."/>
            <person name="Shiraki T."/>
            <person name="Suzuki S."/>
            <person name="Tagami M."/>
            <person name="Waki K."/>
            <person name="Watahiki A."/>
            <person name="Okamura-Oho Y."/>
            <person name="Suzuki H."/>
            <person name="Kawai J."/>
            <person name="Hayashizaki Y."/>
        </authorList>
    </citation>
    <scope>NUCLEOTIDE SEQUENCE [LARGE SCALE MRNA] OF 1-1209</scope>
    <source>
        <strain>C57BL/6J</strain>
        <tissue>Testis</tissue>
    </source>
</reference>
<name>VW5B1_MOUSE</name>
<gene>
    <name type="primary">Vwa5b1</name>
</gene>
<sequence length="1215" mass="133972">MPGLLNCLTGAALPLMESDVTSYVSGYALGLTASLTYGNLEAQPFQGLFVYPIDEYSTVVGFEAVIADRVVTIQLRDKAKLDRSHLDIQPATVTGNFPEEESPIAPGKVTLDEDLERVLFVVNLGTIAPMENVTVFISTSSELPTLPSGAVRVLLPAICAPTVPPSCTHRFGSSSPQPQGKDPHCFGTQTKDSYNRLCLATLLDTKVTNPMEYEFKFQLEIRGPCLLAGVESPTHEIRADAAPSAHSAKSIIITLAKKHTFDRPVEILLHPSEPHMPHVLVEKGDMTLGEYDQHLKGKADFIRGTKKDNSAERKTEVIRKRLHKDIPHHSVIMLNFCPDLQSVQPNPRKAHGEFIFLIDRSNSMSKTNIQCIKEAMLVALKSLMPACFFNIIGFGSTFKAVFASSRIYNEENLTMACDCIQRMQADMGGTNMLSPLKWVLRQPLRRGHPRLLFLITDGSVNNTGKVLELVRNHASSTRCYSFGIGPTVCYRLVKGLASVSKGSAEFLMEGERLQPKMVKSLKKAMAPVLSDVTVEWVFPETTEALISPVSTSSLFPGERLMGYGIVCDASLYISNSRSDKRRKYGMLHTQESSSSVFYPSQDEGLSPGSGNCAKNVNQGQTKDAHPCNGDSPTHHGLDVSRRRRAYSTNQISSHKTCPRATTASDPTGTARRYPLRKAKVQDLASESDWESQKWQTDLQTLLNEGHNLSQGPKLHGPGARRPSLLPQGCQLMRFFDQKPQAWGPVRELDCGASRTSAPNSQSSEDLAIEPAHCPSTFERETSLDLEPMAESEEQANPCRTATPSPVVGKALVKGLCANQRMQWEVSFELEPPALKRGDTQNADMWSETFHHLAARAIIREFEHLAEREDEIELGSNRRYQVNAVHTSKACSVISKYTAFVPVDINKRQYLPTVVKYPNSGAMLSFRNLTRQWGGSSAGLGRPQSMLREHSSAAGDSKFQTLALQDSPTSTFNKTPSPGHEKQTTAEGPPQNLSASAPSSMKATETLFGSKLNLNKSRLLTRATKGFLSKSLPKASEATPGSQSSDYIPLVSLQLASGAFLLNEAFCTTIQIPMEKLKWTSPFSCLRMSLVTRRQDLKTQSPQDCTSLSSSPPSCDGISLKSEESSDQESNAMLEHMGKLWATVVALAWLEHSSANYIIEWELVAAKASSWVEKQKVPEGRTLSTLKNTARQLFVLLRHWDEKLEFNMLCYNPNYV</sequence>
<keyword id="KW-0325">Glycoprotein</keyword>
<keyword id="KW-0597">Phosphoprotein</keyword>
<keyword id="KW-1185">Reference proteome</keyword>
<keyword id="KW-0964">Secreted</keyword>
<keyword id="KW-0732">Signal</keyword>
<proteinExistence type="evidence at transcript level"/>
<evidence type="ECO:0000250" key="1">
    <source>
        <dbReference type="UniProtKB" id="Q5TIE3"/>
    </source>
</evidence>
<evidence type="ECO:0000255" key="2"/>
<evidence type="ECO:0000255" key="3">
    <source>
        <dbReference type="PROSITE-ProRule" id="PRU00219"/>
    </source>
</evidence>
<evidence type="ECO:0000255" key="4">
    <source>
        <dbReference type="PROSITE-ProRule" id="PRU00801"/>
    </source>
</evidence>
<evidence type="ECO:0000256" key="5">
    <source>
        <dbReference type="SAM" id="MobiDB-lite"/>
    </source>
</evidence>
<evidence type="ECO:0000305" key="6"/>
<organism>
    <name type="scientific">Mus musculus</name>
    <name type="common">Mouse</name>
    <dbReference type="NCBI Taxonomy" id="10090"/>
    <lineage>
        <taxon>Eukaryota</taxon>
        <taxon>Metazoa</taxon>
        <taxon>Chordata</taxon>
        <taxon>Craniata</taxon>
        <taxon>Vertebrata</taxon>
        <taxon>Euteleostomi</taxon>
        <taxon>Mammalia</taxon>
        <taxon>Eutheria</taxon>
        <taxon>Euarchontoglires</taxon>
        <taxon>Glires</taxon>
        <taxon>Rodentia</taxon>
        <taxon>Myomorpha</taxon>
        <taxon>Muroidea</taxon>
        <taxon>Muridae</taxon>
        <taxon>Murinae</taxon>
        <taxon>Mus</taxon>
        <taxon>Mus</taxon>
    </lineage>
</organism>
<accession>A9Z1V5</accession>
<accession>Q6PFX4</accession>
<accession>Q9CUE8</accession>